<dbReference type="EC" id="6.3.4.5" evidence="1"/>
<dbReference type="EMBL" id="CP000108">
    <property type="protein sequence ID" value="ABB28043.1"/>
    <property type="molecule type" value="Genomic_DNA"/>
</dbReference>
<dbReference type="SMR" id="Q3ASI2"/>
<dbReference type="STRING" id="340177.Cag_0777"/>
<dbReference type="KEGG" id="cch:Cag_0777"/>
<dbReference type="eggNOG" id="COG0137">
    <property type="taxonomic scope" value="Bacteria"/>
</dbReference>
<dbReference type="HOGENOM" id="CLU_032784_4_2_10"/>
<dbReference type="OrthoDB" id="9801641at2"/>
<dbReference type="UniPathway" id="UPA00068">
    <property type="reaction ID" value="UER00113"/>
</dbReference>
<dbReference type="GO" id="GO:0005737">
    <property type="term" value="C:cytoplasm"/>
    <property type="evidence" value="ECO:0007669"/>
    <property type="project" value="UniProtKB-SubCell"/>
</dbReference>
<dbReference type="GO" id="GO:0004055">
    <property type="term" value="F:argininosuccinate synthase activity"/>
    <property type="evidence" value="ECO:0007669"/>
    <property type="project" value="UniProtKB-UniRule"/>
</dbReference>
<dbReference type="GO" id="GO:0005524">
    <property type="term" value="F:ATP binding"/>
    <property type="evidence" value="ECO:0007669"/>
    <property type="project" value="UniProtKB-UniRule"/>
</dbReference>
<dbReference type="GO" id="GO:0000053">
    <property type="term" value="P:argininosuccinate metabolic process"/>
    <property type="evidence" value="ECO:0007669"/>
    <property type="project" value="TreeGrafter"/>
</dbReference>
<dbReference type="GO" id="GO:0006526">
    <property type="term" value="P:L-arginine biosynthetic process"/>
    <property type="evidence" value="ECO:0007669"/>
    <property type="project" value="UniProtKB-UniRule"/>
</dbReference>
<dbReference type="GO" id="GO:0000050">
    <property type="term" value="P:urea cycle"/>
    <property type="evidence" value="ECO:0007669"/>
    <property type="project" value="TreeGrafter"/>
</dbReference>
<dbReference type="CDD" id="cd01999">
    <property type="entry name" value="ASS"/>
    <property type="match status" value="1"/>
</dbReference>
<dbReference type="FunFam" id="3.40.50.620:FF:000019">
    <property type="entry name" value="Argininosuccinate synthase"/>
    <property type="match status" value="1"/>
</dbReference>
<dbReference type="FunFam" id="3.90.1260.10:FF:000007">
    <property type="entry name" value="Argininosuccinate synthase"/>
    <property type="match status" value="1"/>
</dbReference>
<dbReference type="Gene3D" id="3.90.1260.10">
    <property type="entry name" value="Argininosuccinate synthetase, chain A, domain 2"/>
    <property type="match status" value="1"/>
</dbReference>
<dbReference type="Gene3D" id="3.40.50.620">
    <property type="entry name" value="HUPs"/>
    <property type="match status" value="1"/>
</dbReference>
<dbReference type="Gene3D" id="1.20.5.470">
    <property type="entry name" value="Single helix bin"/>
    <property type="match status" value="1"/>
</dbReference>
<dbReference type="HAMAP" id="MF_00005">
    <property type="entry name" value="Arg_succ_synth_type1"/>
    <property type="match status" value="1"/>
</dbReference>
<dbReference type="InterPro" id="IPR048268">
    <property type="entry name" value="Arginosuc_syn_C"/>
</dbReference>
<dbReference type="InterPro" id="IPR048267">
    <property type="entry name" value="Arginosuc_syn_N"/>
</dbReference>
<dbReference type="InterPro" id="IPR001518">
    <property type="entry name" value="Arginosuc_synth"/>
</dbReference>
<dbReference type="InterPro" id="IPR018223">
    <property type="entry name" value="Arginosuc_synth_CS"/>
</dbReference>
<dbReference type="InterPro" id="IPR023434">
    <property type="entry name" value="Arginosuc_synth_type_1_subfam"/>
</dbReference>
<dbReference type="InterPro" id="IPR024074">
    <property type="entry name" value="AS_cat/multimer_dom_body"/>
</dbReference>
<dbReference type="InterPro" id="IPR014729">
    <property type="entry name" value="Rossmann-like_a/b/a_fold"/>
</dbReference>
<dbReference type="NCBIfam" id="TIGR00032">
    <property type="entry name" value="argG"/>
    <property type="match status" value="1"/>
</dbReference>
<dbReference type="NCBIfam" id="NF001770">
    <property type="entry name" value="PRK00509.1"/>
    <property type="match status" value="1"/>
</dbReference>
<dbReference type="PANTHER" id="PTHR11587">
    <property type="entry name" value="ARGININOSUCCINATE SYNTHASE"/>
    <property type="match status" value="1"/>
</dbReference>
<dbReference type="PANTHER" id="PTHR11587:SF2">
    <property type="entry name" value="ARGININOSUCCINATE SYNTHASE"/>
    <property type="match status" value="1"/>
</dbReference>
<dbReference type="Pfam" id="PF20979">
    <property type="entry name" value="Arginosuc_syn_C"/>
    <property type="match status" value="1"/>
</dbReference>
<dbReference type="Pfam" id="PF00764">
    <property type="entry name" value="Arginosuc_synth"/>
    <property type="match status" value="1"/>
</dbReference>
<dbReference type="SUPFAM" id="SSF52402">
    <property type="entry name" value="Adenine nucleotide alpha hydrolases-like"/>
    <property type="match status" value="1"/>
</dbReference>
<dbReference type="SUPFAM" id="SSF69864">
    <property type="entry name" value="Argininosuccinate synthetase, C-terminal domain"/>
    <property type="match status" value="1"/>
</dbReference>
<dbReference type="PROSITE" id="PS00564">
    <property type="entry name" value="ARGININOSUCCIN_SYN_1"/>
    <property type="match status" value="1"/>
</dbReference>
<dbReference type="PROSITE" id="PS00565">
    <property type="entry name" value="ARGININOSUCCIN_SYN_2"/>
    <property type="match status" value="1"/>
</dbReference>
<comment type="catalytic activity">
    <reaction evidence="1">
        <text>L-citrulline + L-aspartate + ATP = 2-(N(omega)-L-arginino)succinate + AMP + diphosphate + H(+)</text>
        <dbReference type="Rhea" id="RHEA:10932"/>
        <dbReference type="ChEBI" id="CHEBI:15378"/>
        <dbReference type="ChEBI" id="CHEBI:29991"/>
        <dbReference type="ChEBI" id="CHEBI:30616"/>
        <dbReference type="ChEBI" id="CHEBI:33019"/>
        <dbReference type="ChEBI" id="CHEBI:57472"/>
        <dbReference type="ChEBI" id="CHEBI:57743"/>
        <dbReference type="ChEBI" id="CHEBI:456215"/>
        <dbReference type="EC" id="6.3.4.5"/>
    </reaction>
</comment>
<comment type="pathway">
    <text evidence="1">Amino-acid biosynthesis; L-arginine biosynthesis; L-arginine from L-ornithine and carbamoyl phosphate: step 2/3.</text>
</comment>
<comment type="subunit">
    <text evidence="1">Homotetramer.</text>
</comment>
<comment type="subcellular location">
    <subcellularLocation>
        <location evidence="1">Cytoplasm</location>
    </subcellularLocation>
</comment>
<comment type="similarity">
    <text evidence="1">Belongs to the argininosuccinate synthase family. Type 1 subfamily.</text>
</comment>
<gene>
    <name evidence="1" type="primary">argG</name>
    <name type="ordered locus">Cag_0777</name>
</gene>
<name>ASSY_CHLCH</name>
<protein>
    <recommendedName>
        <fullName evidence="1">Argininosuccinate synthase</fullName>
        <ecNumber evidence="1">6.3.4.5</ecNumber>
    </recommendedName>
    <alternativeName>
        <fullName evidence="1">Citrulline--aspartate ligase</fullName>
    </alternativeName>
</protein>
<proteinExistence type="inferred from homology"/>
<sequence>MSKEKIAIAYSGGLDTSVMIKWLKDKYDADIVAVTGNLGQQKEIENLESKALATGASSFHFVDLRTEFVEEYIWRALKAGALYEDVYPLATALGRPLLAKALVDVAVAENCTMLAHGCTGKGNDQVRFEVTFASLAPHMKILAPLRVWEFTSREAEIAYAMEHNIPVSATKKNPYSVDENIWGISIECGVLEDPMIAPPEDAYQITTSPEKAPDTPAVVELEFVEGVPVAMDGKKMNGLDIIVQLNTIGAAHGIGRLDMIENRVVGIKSREIYEAPAATILHFAHRELERLTLEKSVFQYKKNISQDYANIIYNGTWFSPLRTSLDAFVNETQKPVTGLVRLKLYKGNVTLLGRTSPYSLYNEALATYTEADTFNHKAAEGFIHLYGLGLKTFNQIHKG</sequence>
<reference key="1">
    <citation type="submission" date="2005-08" db="EMBL/GenBank/DDBJ databases">
        <title>Complete sequence of Chlorobium chlorochromatii CaD3.</title>
        <authorList>
            <consortium name="US DOE Joint Genome Institute"/>
            <person name="Copeland A."/>
            <person name="Lucas S."/>
            <person name="Lapidus A."/>
            <person name="Barry K."/>
            <person name="Detter J.C."/>
            <person name="Glavina T."/>
            <person name="Hammon N."/>
            <person name="Israni S."/>
            <person name="Pitluck S."/>
            <person name="Bryant D."/>
            <person name="Schmutz J."/>
            <person name="Larimer F."/>
            <person name="Land M."/>
            <person name="Kyrpides N."/>
            <person name="Ivanova N."/>
            <person name="Richardson P."/>
        </authorList>
    </citation>
    <scope>NUCLEOTIDE SEQUENCE [LARGE SCALE GENOMIC DNA]</scope>
    <source>
        <strain>CaD3</strain>
    </source>
</reference>
<organism>
    <name type="scientific">Chlorobium chlorochromatii (strain CaD3)</name>
    <dbReference type="NCBI Taxonomy" id="340177"/>
    <lineage>
        <taxon>Bacteria</taxon>
        <taxon>Pseudomonadati</taxon>
        <taxon>Chlorobiota</taxon>
        <taxon>Chlorobiia</taxon>
        <taxon>Chlorobiales</taxon>
        <taxon>Chlorobiaceae</taxon>
        <taxon>Chlorobium/Pelodictyon group</taxon>
        <taxon>Chlorobium</taxon>
    </lineage>
</organism>
<keyword id="KW-0028">Amino-acid biosynthesis</keyword>
<keyword id="KW-0055">Arginine biosynthesis</keyword>
<keyword id="KW-0067">ATP-binding</keyword>
<keyword id="KW-0963">Cytoplasm</keyword>
<keyword id="KW-0436">Ligase</keyword>
<keyword id="KW-0547">Nucleotide-binding</keyword>
<evidence type="ECO:0000255" key="1">
    <source>
        <dbReference type="HAMAP-Rule" id="MF_00005"/>
    </source>
</evidence>
<accession>Q3ASI2</accession>
<feature type="chain" id="PRO_0000263911" description="Argininosuccinate synthase">
    <location>
        <begin position="1"/>
        <end position="399"/>
    </location>
</feature>
<feature type="binding site" evidence="1">
    <location>
        <begin position="9"/>
        <end position="17"/>
    </location>
    <ligand>
        <name>ATP</name>
        <dbReference type="ChEBI" id="CHEBI:30616"/>
    </ligand>
</feature>
<feature type="binding site" evidence="1">
    <location>
        <position position="87"/>
    </location>
    <ligand>
        <name>L-citrulline</name>
        <dbReference type="ChEBI" id="CHEBI:57743"/>
    </ligand>
</feature>
<feature type="binding site" evidence="1">
    <location>
        <position position="117"/>
    </location>
    <ligand>
        <name>ATP</name>
        <dbReference type="ChEBI" id="CHEBI:30616"/>
    </ligand>
</feature>
<feature type="binding site" evidence="1">
    <location>
        <position position="119"/>
    </location>
    <ligand>
        <name>L-aspartate</name>
        <dbReference type="ChEBI" id="CHEBI:29991"/>
    </ligand>
</feature>
<feature type="binding site" evidence="1">
    <location>
        <position position="123"/>
    </location>
    <ligand>
        <name>L-aspartate</name>
        <dbReference type="ChEBI" id="CHEBI:29991"/>
    </ligand>
</feature>
<feature type="binding site" evidence="1">
    <location>
        <position position="123"/>
    </location>
    <ligand>
        <name>L-citrulline</name>
        <dbReference type="ChEBI" id="CHEBI:57743"/>
    </ligand>
</feature>
<feature type="binding site" evidence="1">
    <location>
        <position position="124"/>
    </location>
    <ligand>
        <name>L-aspartate</name>
        <dbReference type="ChEBI" id="CHEBI:29991"/>
    </ligand>
</feature>
<feature type="binding site" evidence="1">
    <location>
        <position position="127"/>
    </location>
    <ligand>
        <name>L-citrulline</name>
        <dbReference type="ChEBI" id="CHEBI:57743"/>
    </ligand>
</feature>
<feature type="binding site" evidence="1">
    <location>
        <position position="176"/>
    </location>
    <ligand>
        <name>L-citrulline</name>
        <dbReference type="ChEBI" id="CHEBI:57743"/>
    </ligand>
</feature>
<feature type="binding site" evidence="1">
    <location>
        <position position="185"/>
    </location>
    <ligand>
        <name>L-citrulline</name>
        <dbReference type="ChEBI" id="CHEBI:57743"/>
    </ligand>
</feature>
<feature type="binding site" evidence="1">
    <location>
        <position position="261"/>
    </location>
    <ligand>
        <name>L-citrulline</name>
        <dbReference type="ChEBI" id="CHEBI:57743"/>
    </ligand>
</feature>
<feature type="binding site" evidence="1">
    <location>
        <position position="273"/>
    </location>
    <ligand>
        <name>L-citrulline</name>
        <dbReference type="ChEBI" id="CHEBI:57743"/>
    </ligand>
</feature>